<organism>
    <name type="scientific">Yersinia pestis bv. Antiqua (strain Angola)</name>
    <dbReference type="NCBI Taxonomy" id="349746"/>
    <lineage>
        <taxon>Bacteria</taxon>
        <taxon>Pseudomonadati</taxon>
        <taxon>Pseudomonadota</taxon>
        <taxon>Gammaproteobacteria</taxon>
        <taxon>Enterobacterales</taxon>
        <taxon>Yersiniaceae</taxon>
        <taxon>Yersinia</taxon>
    </lineage>
</organism>
<evidence type="ECO:0000255" key="1">
    <source>
        <dbReference type="HAMAP-Rule" id="MF_00191"/>
    </source>
</evidence>
<sequence length="317" mass="34709">MQILLANPRGFCAGVDRAISIVERAIEMYGAPIYVRHEVVHNRYVVESLCERGAIFIEEISEVPDGSILIFSAHGVSQAVRAEARSRNLTMLFDATCPLVTKVHMEVARASRKGKEAILIGHAGHPEVEGTMGQYSNPNGGMYLVESPDDVWQLNVKDENNLCFMTQTTLSVDDTSAVIDALNTRFPKIVGPRKDDICYATTNRQEAVRNLANDADIVLVVGSKNSSNSNRLAELVQRMGKPAYLIDSAADIQEFWLQGAKCIGVTAGASAPDILVQQVIARLKDLGAGESIELSGREENIVFEVPKELRVEVKQID</sequence>
<name>ISPH_YERPG</name>
<reference key="1">
    <citation type="journal article" date="2010" name="J. Bacteriol.">
        <title>Genome sequence of the deep-rooted Yersinia pestis strain Angola reveals new insights into the evolution and pangenome of the plague bacterium.</title>
        <authorList>
            <person name="Eppinger M."/>
            <person name="Worsham P.L."/>
            <person name="Nikolich M.P."/>
            <person name="Riley D.R."/>
            <person name="Sebastian Y."/>
            <person name="Mou S."/>
            <person name="Achtman M."/>
            <person name="Lindler L.E."/>
            <person name="Ravel J."/>
        </authorList>
    </citation>
    <scope>NUCLEOTIDE SEQUENCE [LARGE SCALE GENOMIC DNA]</scope>
    <source>
        <strain>Angola</strain>
    </source>
</reference>
<gene>
    <name evidence="1" type="primary">ispH</name>
    <name type="ordered locus">YpAngola_A0787</name>
</gene>
<comment type="function">
    <text evidence="1">Catalyzes the conversion of 1-hydroxy-2-methyl-2-(E)-butenyl 4-diphosphate (HMBPP) into a mixture of isopentenyl diphosphate (IPP) and dimethylallyl diphosphate (DMAPP). Acts in the terminal step of the DOXP/MEP pathway for isoprenoid precursor biosynthesis.</text>
</comment>
<comment type="catalytic activity">
    <reaction evidence="1">
        <text>isopentenyl diphosphate + 2 oxidized [2Fe-2S]-[ferredoxin] + H2O = (2E)-4-hydroxy-3-methylbut-2-enyl diphosphate + 2 reduced [2Fe-2S]-[ferredoxin] + 2 H(+)</text>
        <dbReference type="Rhea" id="RHEA:24488"/>
        <dbReference type="Rhea" id="RHEA-COMP:10000"/>
        <dbReference type="Rhea" id="RHEA-COMP:10001"/>
        <dbReference type="ChEBI" id="CHEBI:15377"/>
        <dbReference type="ChEBI" id="CHEBI:15378"/>
        <dbReference type="ChEBI" id="CHEBI:33737"/>
        <dbReference type="ChEBI" id="CHEBI:33738"/>
        <dbReference type="ChEBI" id="CHEBI:128753"/>
        <dbReference type="ChEBI" id="CHEBI:128769"/>
        <dbReference type="EC" id="1.17.7.4"/>
    </reaction>
</comment>
<comment type="catalytic activity">
    <reaction evidence="1">
        <text>dimethylallyl diphosphate + 2 oxidized [2Fe-2S]-[ferredoxin] + H2O = (2E)-4-hydroxy-3-methylbut-2-enyl diphosphate + 2 reduced [2Fe-2S]-[ferredoxin] + 2 H(+)</text>
        <dbReference type="Rhea" id="RHEA:24825"/>
        <dbReference type="Rhea" id="RHEA-COMP:10000"/>
        <dbReference type="Rhea" id="RHEA-COMP:10001"/>
        <dbReference type="ChEBI" id="CHEBI:15377"/>
        <dbReference type="ChEBI" id="CHEBI:15378"/>
        <dbReference type="ChEBI" id="CHEBI:33737"/>
        <dbReference type="ChEBI" id="CHEBI:33738"/>
        <dbReference type="ChEBI" id="CHEBI:57623"/>
        <dbReference type="ChEBI" id="CHEBI:128753"/>
        <dbReference type="EC" id="1.17.7.4"/>
    </reaction>
</comment>
<comment type="cofactor">
    <cofactor evidence="1">
        <name>[4Fe-4S] cluster</name>
        <dbReference type="ChEBI" id="CHEBI:49883"/>
    </cofactor>
    <text evidence="1">Binds 1 [4Fe-4S] cluster per subunit.</text>
</comment>
<comment type="pathway">
    <text evidence="1">Isoprenoid biosynthesis; dimethylallyl diphosphate biosynthesis; dimethylallyl diphosphate from (2E)-4-hydroxy-3-methylbutenyl diphosphate: step 1/1.</text>
</comment>
<comment type="pathway">
    <text evidence="1">Isoprenoid biosynthesis; isopentenyl diphosphate biosynthesis via DXP pathway; isopentenyl diphosphate from 1-deoxy-D-xylulose 5-phosphate: step 6/6.</text>
</comment>
<comment type="subunit">
    <text evidence="1">Homodimer.</text>
</comment>
<comment type="similarity">
    <text evidence="1">Belongs to the IspH family.</text>
</comment>
<dbReference type="EC" id="1.17.7.4" evidence="1"/>
<dbReference type="EMBL" id="CP000901">
    <property type="protein sequence ID" value="ABX87121.1"/>
    <property type="molecule type" value="Genomic_DNA"/>
</dbReference>
<dbReference type="RefSeq" id="WP_002210506.1">
    <property type="nucleotide sequence ID" value="NZ_CP009935.1"/>
</dbReference>
<dbReference type="SMR" id="A9R005"/>
<dbReference type="GeneID" id="57974132"/>
<dbReference type="KEGG" id="ypg:YpAngola_A0787"/>
<dbReference type="PATRIC" id="fig|349746.12.peg.1735"/>
<dbReference type="UniPathway" id="UPA00056">
    <property type="reaction ID" value="UER00097"/>
</dbReference>
<dbReference type="UniPathway" id="UPA00059">
    <property type="reaction ID" value="UER00105"/>
</dbReference>
<dbReference type="GO" id="GO:0051539">
    <property type="term" value="F:4 iron, 4 sulfur cluster binding"/>
    <property type="evidence" value="ECO:0007669"/>
    <property type="project" value="UniProtKB-UniRule"/>
</dbReference>
<dbReference type="GO" id="GO:0051745">
    <property type="term" value="F:4-hydroxy-3-methylbut-2-enyl diphosphate reductase activity"/>
    <property type="evidence" value="ECO:0007669"/>
    <property type="project" value="UniProtKB-UniRule"/>
</dbReference>
<dbReference type="GO" id="GO:0046872">
    <property type="term" value="F:metal ion binding"/>
    <property type="evidence" value="ECO:0007669"/>
    <property type="project" value="UniProtKB-KW"/>
</dbReference>
<dbReference type="GO" id="GO:0050992">
    <property type="term" value="P:dimethylallyl diphosphate biosynthetic process"/>
    <property type="evidence" value="ECO:0007669"/>
    <property type="project" value="UniProtKB-UniRule"/>
</dbReference>
<dbReference type="GO" id="GO:0019288">
    <property type="term" value="P:isopentenyl diphosphate biosynthetic process, methylerythritol 4-phosphate pathway"/>
    <property type="evidence" value="ECO:0007669"/>
    <property type="project" value="UniProtKB-UniRule"/>
</dbReference>
<dbReference type="GO" id="GO:0016114">
    <property type="term" value="P:terpenoid biosynthetic process"/>
    <property type="evidence" value="ECO:0007669"/>
    <property type="project" value="UniProtKB-UniRule"/>
</dbReference>
<dbReference type="CDD" id="cd13944">
    <property type="entry name" value="lytB_ispH"/>
    <property type="match status" value="1"/>
</dbReference>
<dbReference type="FunFam" id="3.40.50.11270:FF:000001">
    <property type="entry name" value="4-hydroxy-3-methylbut-2-enyl diphosphate reductase"/>
    <property type="match status" value="1"/>
</dbReference>
<dbReference type="Gene3D" id="3.40.50.11270">
    <property type="match status" value="1"/>
</dbReference>
<dbReference type="Gene3D" id="3.40.1010.20">
    <property type="entry name" value="4-hydroxy-3-methylbut-2-enyl diphosphate reductase, catalytic domain"/>
    <property type="match status" value="2"/>
</dbReference>
<dbReference type="HAMAP" id="MF_00191">
    <property type="entry name" value="IspH"/>
    <property type="match status" value="1"/>
</dbReference>
<dbReference type="InterPro" id="IPR003451">
    <property type="entry name" value="LytB/IspH"/>
</dbReference>
<dbReference type="NCBIfam" id="TIGR00216">
    <property type="entry name" value="ispH_lytB"/>
    <property type="match status" value="1"/>
</dbReference>
<dbReference type="NCBIfam" id="NF002188">
    <property type="entry name" value="PRK01045.1-2"/>
    <property type="match status" value="1"/>
</dbReference>
<dbReference type="NCBIfam" id="NF002190">
    <property type="entry name" value="PRK01045.1-4"/>
    <property type="match status" value="1"/>
</dbReference>
<dbReference type="PANTHER" id="PTHR30426">
    <property type="entry name" value="4-HYDROXY-3-METHYLBUT-2-ENYL DIPHOSPHATE REDUCTASE"/>
    <property type="match status" value="1"/>
</dbReference>
<dbReference type="PANTHER" id="PTHR30426:SF0">
    <property type="entry name" value="4-HYDROXY-3-METHYLBUT-2-ENYL DIPHOSPHATE REDUCTASE"/>
    <property type="match status" value="1"/>
</dbReference>
<dbReference type="Pfam" id="PF02401">
    <property type="entry name" value="LYTB"/>
    <property type="match status" value="1"/>
</dbReference>
<proteinExistence type="inferred from homology"/>
<feature type="chain" id="PRO_1000098994" description="4-hydroxy-3-methylbut-2-enyl diphosphate reductase">
    <location>
        <begin position="1"/>
        <end position="317"/>
    </location>
</feature>
<feature type="active site" description="Proton donor" evidence="1">
    <location>
        <position position="127"/>
    </location>
</feature>
<feature type="binding site" evidence="1">
    <location>
        <position position="12"/>
    </location>
    <ligand>
        <name>[4Fe-4S] cluster</name>
        <dbReference type="ChEBI" id="CHEBI:49883"/>
    </ligand>
</feature>
<feature type="binding site" evidence="1">
    <location>
        <position position="41"/>
    </location>
    <ligand>
        <name>(2E)-4-hydroxy-3-methylbut-2-enyl diphosphate</name>
        <dbReference type="ChEBI" id="CHEBI:128753"/>
    </ligand>
</feature>
<feature type="binding site" evidence="1">
    <location>
        <position position="41"/>
    </location>
    <ligand>
        <name>dimethylallyl diphosphate</name>
        <dbReference type="ChEBI" id="CHEBI:57623"/>
    </ligand>
</feature>
<feature type="binding site" evidence="1">
    <location>
        <position position="41"/>
    </location>
    <ligand>
        <name>isopentenyl diphosphate</name>
        <dbReference type="ChEBI" id="CHEBI:128769"/>
    </ligand>
</feature>
<feature type="binding site" evidence="1">
    <location>
        <position position="74"/>
    </location>
    <ligand>
        <name>(2E)-4-hydroxy-3-methylbut-2-enyl diphosphate</name>
        <dbReference type="ChEBI" id="CHEBI:128753"/>
    </ligand>
</feature>
<feature type="binding site" evidence="1">
    <location>
        <position position="74"/>
    </location>
    <ligand>
        <name>dimethylallyl diphosphate</name>
        <dbReference type="ChEBI" id="CHEBI:57623"/>
    </ligand>
</feature>
<feature type="binding site" evidence="1">
    <location>
        <position position="74"/>
    </location>
    <ligand>
        <name>isopentenyl diphosphate</name>
        <dbReference type="ChEBI" id="CHEBI:128769"/>
    </ligand>
</feature>
<feature type="binding site" evidence="1">
    <location>
        <position position="97"/>
    </location>
    <ligand>
        <name>[4Fe-4S] cluster</name>
        <dbReference type="ChEBI" id="CHEBI:49883"/>
    </ligand>
</feature>
<feature type="binding site" evidence="1">
    <location>
        <position position="125"/>
    </location>
    <ligand>
        <name>(2E)-4-hydroxy-3-methylbut-2-enyl diphosphate</name>
        <dbReference type="ChEBI" id="CHEBI:128753"/>
    </ligand>
</feature>
<feature type="binding site" evidence="1">
    <location>
        <position position="125"/>
    </location>
    <ligand>
        <name>dimethylallyl diphosphate</name>
        <dbReference type="ChEBI" id="CHEBI:57623"/>
    </ligand>
</feature>
<feature type="binding site" evidence="1">
    <location>
        <position position="125"/>
    </location>
    <ligand>
        <name>isopentenyl diphosphate</name>
        <dbReference type="ChEBI" id="CHEBI:128769"/>
    </ligand>
</feature>
<feature type="binding site" evidence="1">
    <location>
        <position position="168"/>
    </location>
    <ligand>
        <name>(2E)-4-hydroxy-3-methylbut-2-enyl diphosphate</name>
        <dbReference type="ChEBI" id="CHEBI:128753"/>
    </ligand>
</feature>
<feature type="binding site" evidence="1">
    <location>
        <position position="198"/>
    </location>
    <ligand>
        <name>[4Fe-4S] cluster</name>
        <dbReference type="ChEBI" id="CHEBI:49883"/>
    </ligand>
</feature>
<feature type="binding site" evidence="1">
    <location>
        <position position="226"/>
    </location>
    <ligand>
        <name>(2E)-4-hydroxy-3-methylbut-2-enyl diphosphate</name>
        <dbReference type="ChEBI" id="CHEBI:128753"/>
    </ligand>
</feature>
<feature type="binding site" evidence="1">
    <location>
        <position position="226"/>
    </location>
    <ligand>
        <name>dimethylallyl diphosphate</name>
        <dbReference type="ChEBI" id="CHEBI:57623"/>
    </ligand>
</feature>
<feature type="binding site" evidence="1">
    <location>
        <position position="226"/>
    </location>
    <ligand>
        <name>isopentenyl diphosphate</name>
        <dbReference type="ChEBI" id="CHEBI:128769"/>
    </ligand>
</feature>
<feature type="binding site" evidence="1">
    <location>
        <position position="227"/>
    </location>
    <ligand>
        <name>(2E)-4-hydroxy-3-methylbut-2-enyl diphosphate</name>
        <dbReference type="ChEBI" id="CHEBI:128753"/>
    </ligand>
</feature>
<feature type="binding site" evidence="1">
    <location>
        <position position="227"/>
    </location>
    <ligand>
        <name>dimethylallyl diphosphate</name>
        <dbReference type="ChEBI" id="CHEBI:57623"/>
    </ligand>
</feature>
<feature type="binding site" evidence="1">
    <location>
        <position position="227"/>
    </location>
    <ligand>
        <name>isopentenyl diphosphate</name>
        <dbReference type="ChEBI" id="CHEBI:128769"/>
    </ligand>
</feature>
<feature type="binding site" evidence="1">
    <location>
        <position position="228"/>
    </location>
    <ligand>
        <name>(2E)-4-hydroxy-3-methylbut-2-enyl diphosphate</name>
        <dbReference type="ChEBI" id="CHEBI:128753"/>
    </ligand>
</feature>
<feature type="binding site" evidence="1">
    <location>
        <position position="228"/>
    </location>
    <ligand>
        <name>dimethylallyl diphosphate</name>
        <dbReference type="ChEBI" id="CHEBI:57623"/>
    </ligand>
</feature>
<feature type="binding site" evidence="1">
    <location>
        <position position="228"/>
    </location>
    <ligand>
        <name>isopentenyl diphosphate</name>
        <dbReference type="ChEBI" id="CHEBI:128769"/>
    </ligand>
</feature>
<feature type="binding site" evidence="1">
    <location>
        <position position="270"/>
    </location>
    <ligand>
        <name>(2E)-4-hydroxy-3-methylbut-2-enyl diphosphate</name>
        <dbReference type="ChEBI" id="CHEBI:128753"/>
    </ligand>
</feature>
<feature type="binding site" evidence="1">
    <location>
        <position position="270"/>
    </location>
    <ligand>
        <name>dimethylallyl diphosphate</name>
        <dbReference type="ChEBI" id="CHEBI:57623"/>
    </ligand>
</feature>
<feature type="binding site" evidence="1">
    <location>
        <position position="270"/>
    </location>
    <ligand>
        <name>isopentenyl diphosphate</name>
        <dbReference type="ChEBI" id="CHEBI:128769"/>
    </ligand>
</feature>
<keyword id="KW-0004">4Fe-4S</keyword>
<keyword id="KW-0408">Iron</keyword>
<keyword id="KW-0411">Iron-sulfur</keyword>
<keyword id="KW-0414">Isoprene biosynthesis</keyword>
<keyword id="KW-0479">Metal-binding</keyword>
<keyword id="KW-0560">Oxidoreductase</keyword>
<protein>
    <recommendedName>
        <fullName evidence="1">4-hydroxy-3-methylbut-2-enyl diphosphate reductase</fullName>
        <shortName evidence="1">HMBPP reductase</shortName>
        <ecNumber evidence="1">1.17.7.4</ecNumber>
    </recommendedName>
</protein>
<accession>A9R005</accession>